<dbReference type="EMBL" id="AK078385">
    <property type="protein sequence ID" value="BAC37246.1"/>
    <property type="molecule type" value="mRNA"/>
</dbReference>
<dbReference type="EMBL" id="BC010801">
    <property type="protein sequence ID" value="AAH10801.1"/>
    <property type="molecule type" value="mRNA"/>
</dbReference>
<dbReference type="CCDS" id="CCDS23622.1"/>
<dbReference type="RefSeq" id="NP_659042.1">
    <property type="nucleotide sequence ID" value="NM_144793.2"/>
</dbReference>
<dbReference type="SMR" id="Q91XD8"/>
<dbReference type="FunCoup" id="Q91XD8">
    <property type="interactions" value="1445"/>
</dbReference>
<dbReference type="STRING" id="10090.ENSMUSP00000035106"/>
<dbReference type="iPTMnet" id="Q91XD8"/>
<dbReference type="PhosphoSitePlus" id="Q91XD8"/>
<dbReference type="PaxDb" id="10090-ENSMUSP00000035106"/>
<dbReference type="ProteomicsDB" id="256863"/>
<dbReference type="Antibodypedia" id="12178">
    <property type="antibodies" value="117 antibodies from 26 providers"/>
</dbReference>
<dbReference type="Ensembl" id="ENSMUST00000035106.12">
    <property type="protein sequence ID" value="ENSMUSP00000035106.6"/>
    <property type="gene ID" value="ENSMUSG00000032519.12"/>
</dbReference>
<dbReference type="GeneID" id="208638"/>
<dbReference type="KEGG" id="mmu:208638"/>
<dbReference type="UCSC" id="uc009scc.1">
    <property type="organism name" value="mouse"/>
</dbReference>
<dbReference type="AGR" id="MGI:2384782"/>
<dbReference type="CTD" id="54977"/>
<dbReference type="MGI" id="MGI:2384782">
    <property type="gene designation" value="Slc25a38"/>
</dbReference>
<dbReference type="VEuPathDB" id="HostDB:ENSMUSG00000032519"/>
<dbReference type="eggNOG" id="KOG0766">
    <property type="taxonomic scope" value="Eukaryota"/>
</dbReference>
<dbReference type="GeneTree" id="ENSGT00550000075117"/>
<dbReference type="InParanoid" id="Q91XD8"/>
<dbReference type="OMA" id="WGIYEEL"/>
<dbReference type="OrthoDB" id="1924968at2759"/>
<dbReference type="PhylomeDB" id="Q91XD8"/>
<dbReference type="TreeFam" id="TF332793"/>
<dbReference type="BioGRID-ORCS" id="208638">
    <property type="hits" value="2 hits in 76 CRISPR screens"/>
</dbReference>
<dbReference type="PRO" id="PR:Q91XD8"/>
<dbReference type="Proteomes" id="UP000000589">
    <property type="component" value="Chromosome 9"/>
</dbReference>
<dbReference type="RNAct" id="Q91XD8">
    <property type="molecule type" value="protein"/>
</dbReference>
<dbReference type="Bgee" id="ENSMUSG00000032519">
    <property type="expression patterns" value="Expressed in fetal liver hematopoietic progenitor cell and 189 other cell types or tissues"/>
</dbReference>
<dbReference type="ExpressionAtlas" id="Q91XD8">
    <property type="expression patterns" value="baseline and differential"/>
</dbReference>
<dbReference type="GO" id="GO:0005743">
    <property type="term" value="C:mitochondrial inner membrane"/>
    <property type="evidence" value="ECO:0000314"/>
    <property type="project" value="UniProtKB"/>
</dbReference>
<dbReference type="GO" id="GO:0015187">
    <property type="term" value="F:glycine transmembrane transporter activity"/>
    <property type="evidence" value="ECO:0007669"/>
    <property type="project" value="UniProtKB-UniRule"/>
</dbReference>
<dbReference type="GO" id="GO:0030218">
    <property type="term" value="P:erythrocyte differentiation"/>
    <property type="evidence" value="ECO:0000250"/>
    <property type="project" value="UniProtKB"/>
</dbReference>
<dbReference type="GO" id="GO:1904983">
    <property type="term" value="P:glycine import into mitochondrion"/>
    <property type="evidence" value="ECO:0007669"/>
    <property type="project" value="UniProtKB-UniRule"/>
</dbReference>
<dbReference type="FunFam" id="1.50.40.10:FF:000036">
    <property type="entry name" value="Mitochondrial glycine transporter B"/>
    <property type="match status" value="1"/>
</dbReference>
<dbReference type="Gene3D" id="1.50.40.10">
    <property type="entry name" value="Mitochondrial carrier domain"/>
    <property type="match status" value="1"/>
</dbReference>
<dbReference type="HAMAP" id="MF_03064">
    <property type="entry name" value="SLC25A38"/>
    <property type="match status" value="1"/>
</dbReference>
<dbReference type="InterPro" id="IPR030847">
    <property type="entry name" value="Hem25/SLC25A38"/>
</dbReference>
<dbReference type="InterPro" id="IPR018108">
    <property type="entry name" value="Mitochondrial_sb/sol_carrier"/>
</dbReference>
<dbReference type="InterPro" id="IPR023395">
    <property type="entry name" value="Mt_carrier_dom_sf"/>
</dbReference>
<dbReference type="PANTHER" id="PTHR46181">
    <property type="entry name" value="MITOCHONDRIAL GLYCINE TRANSPORTER"/>
    <property type="match status" value="1"/>
</dbReference>
<dbReference type="PANTHER" id="PTHR46181:SF3">
    <property type="entry name" value="MITOCHONDRIAL GLYCINE TRANSPORTER"/>
    <property type="match status" value="1"/>
</dbReference>
<dbReference type="Pfam" id="PF00153">
    <property type="entry name" value="Mito_carr"/>
    <property type="match status" value="3"/>
</dbReference>
<dbReference type="SUPFAM" id="SSF103506">
    <property type="entry name" value="Mitochondrial carrier"/>
    <property type="match status" value="1"/>
</dbReference>
<dbReference type="PROSITE" id="PS50920">
    <property type="entry name" value="SOLCAR"/>
    <property type="match status" value="3"/>
</dbReference>
<organism>
    <name type="scientific">Mus musculus</name>
    <name type="common">Mouse</name>
    <dbReference type="NCBI Taxonomy" id="10090"/>
    <lineage>
        <taxon>Eukaryota</taxon>
        <taxon>Metazoa</taxon>
        <taxon>Chordata</taxon>
        <taxon>Craniata</taxon>
        <taxon>Vertebrata</taxon>
        <taxon>Euteleostomi</taxon>
        <taxon>Mammalia</taxon>
        <taxon>Eutheria</taxon>
        <taxon>Euarchontoglires</taxon>
        <taxon>Glires</taxon>
        <taxon>Rodentia</taxon>
        <taxon>Myomorpha</taxon>
        <taxon>Muroidea</taxon>
        <taxon>Muridae</taxon>
        <taxon>Murinae</taxon>
        <taxon>Mus</taxon>
        <taxon>Mus</taxon>
    </lineage>
</organism>
<reference key="1">
    <citation type="journal article" date="2005" name="Science">
        <title>The transcriptional landscape of the mammalian genome.</title>
        <authorList>
            <person name="Carninci P."/>
            <person name="Kasukawa T."/>
            <person name="Katayama S."/>
            <person name="Gough J."/>
            <person name="Frith M.C."/>
            <person name="Maeda N."/>
            <person name="Oyama R."/>
            <person name="Ravasi T."/>
            <person name="Lenhard B."/>
            <person name="Wells C."/>
            <person name="Kodzius R."/>
            <person name="Shimokawa K."/>
            <person name="Bajic V.B."/>
            <person name="Brenner S.E."/>
            <person name="Batalov S."/>
            <person name="Forrest A.R."/>
            <person name="Zavolan M."/>
            <person name="Davis M.J."/>
            <person name="Wilming L.G."/>
            <person name="Aidinis V."/>
            <person name="Allen J.E."/>
            <person name="Ambesi-Impiombato A."/>
            <person name="Apweiler R."/>
            <person name="Aturaliya R.N."/>
            <person name="Bailey T.L."/>
            <person name="Bansal M."/>
            <person name="Baxter L."/>
            <person name="Beisel K.W."/>
            <person name="Bersano T."/>
            <person name="Bono H."/>
            <person name="Chalk A.M."/>
            <person name="Chiu K.P."/>
            <person name="Choudhary V."/>
            <person name="Christoffels A."/>
            <person name="Clutterbuck D.R."/>
            <person name="Crowe M.L."/>
            <person name="Dalla E."/>
            <person name="Dalrymple B.P."/>
            <person name="de Bono B."/>
            <person name="Della Gatta G."/>
            <person name="di Bernardo D."/>
            <person name="Down T."/>
            <person name="Engstrom P."/>
            <person name="Fagiolini M."/>
            <person name="Faulkner G."/>
            <person name="Fletcher C.F."/>
            <person name="Fukushima T."/>
            <person name="Furuno M."/>
            <person name="Futaki S."/>
            <person name="Gariboldi M."/>
            <person name="Georgii-Hemming P."/>
            <person name="Gingeras T.R."/>
            <person name="Gojobori T."/>
            <person name="Green R.E."/>
            <person name="Gustincich S."/>
            <person name="Harbers M."/>
            <person name="Hayashi Y."/>
            <person name="Hensch T.K."/>
            <person name="Hirokawa N."/>
            <person name="Hill D."/>
            <person name="Huminiecki L."/>
            <person name="Iacono M."/>
            <person name="Ikeo K."/>
            <person name="Iwama A."/>
            <person name="Ishikawa T."/>
            <person name="Jakt M."/>
            <person name="Kanapin A."/>
            <person name="Katoh M."/>
            <person name="Kawasawa Y."/>
            <person name="Kelso J."/>
            <person name="Kitamura H."/>
            <person name="Kitano H."/>
            <person name="Kollias G."/>
            <person name="Krishnan S.P."/>
            <person name="Kruger A."/>
            <person name="Kummerfeld S.K."/>
            <person name="Kurochkin I.V."/>
            <person name="Lareau L.F."/>
            <person name="Lazarevic D."/>
            <person name="Lipovich L."/>
            <person name="Liu J."/>
            <person name="Liuni S."/>
            <person name="McWilliam S."/>
            <person name="Madan Babu M."/>
            <person name="Madera M."/>
            <person name="Marchionni L."/>
            <person name="Matsuda H."/>
            <person name="Matsuzawa S."/>
            <person name="Miki H."/>
            <person name="Mignone F."/>
            <person name="Miyake S."/>
            <person name="Morris K."/>
            <person name="Mottagui-Tabar S."/>
            <person name="Mulder N."/>
            <person name="Nakano N."/>
            <person name="Nakauchi H."/>
            <person name="Ng P."/>
            <person name="Nilsson R."/>
            <person name="Nishiguchi S."/>
            <person name="Nishikawa S."/>
            <person name="Nori F."/>
            <person name="Ohara O."/>
            <person name="Okazaki Y."/>
            <person name="Orlando V."/>
            <person name="Pang K.C."/>
            <person name="Pavan W.J."/>
            <person name="Pavesi G."/>
            <person name="Pesole G."/>
            <person name="Petrovsky N."/>
            <person name="Piazza S."/>
            <person name="Reed J."/>
            <person name="Reid J.F."/>
            <person name="Ring B.Z."/>
            <person name="Ringwald M."/>
            <person name="Rost B."/>
            <person name="Ruan Y."/>
            <person name="Salzberg S.L."/>
            <person name="Sandelin A."/>
            <person name="Schneider C."/>
            <person name="Schoenbach C."/>
            <person name="Sekiguchi K."/>
            <person name="Semple C.A."/>
            <person name="Seno S."/>
            <person name="Sessa L."/>
            <person name="Sheng Y."/>
            <person name="Shibata Y."/>
            <person name="Shimada H."/>
            <person name="Shimada K."/>
            <person name="Silva D."/>
            <person name="Sinclair B."/>
            <person name="Sperling S."/>
            <person name="Stupka E."/>
            <person name="Sugiura K."/>
            <person name="Sultana R."/>
            <person name="Takenaka Y."/>
            <person name="Taki K."/>
            <person name="Tammoja K."/>
            <person name="Tan S.L."/>
            <person name="Tang S."/>
            <person name="Taylor M.S."/>
            <person name="Tegner J."/>
            <person name="Teichmann S.A."/>
            <person name="Ueda H.R."/>
            <person name="van Nimwegen E."/>
            <person name="Verardo R."/>
            <person name="Wei C.L."/>
            <person name="Yagi K."/>
            <person name="Yamanishi H."/>
            <person name="Zabarovsky E."/>
            <person name="Zhu S."/>
            <person name="Zimmer A."/>
            <person name="Hide W."/>
            <person name="Bult C."/>
            <person name="Grimmond S.M."/>
            <person name="Teasdale R.D."/>
            <person name="Liu E.T."/>
            <person name="Brusic V."/>
            <person name="Quackenbush J."/>
            <person name="Wahlestedt C."/>
            <person name="Mattick J.S."/>
            <person name="Hume D.A."/>
            <person name="Kai C."/>
            <person name="Sasaki D."/>
            <person name="Tomaru Y."/>
            <person name="Fukuda S."/>
            <person name="Kanamori-Katayama M."/>
            <person name="Suzuki M."/>
            <person name="Aoki J."/>
            <person name="Arakawa T."/>
            <person name="Iida J."/>
            <person name="Imamura K."/>
            <person name="Itoh M."/>
            <person name="Kato T."/>
            <person name="Kawaji H."/>
            <person name="Kawagashira N."/>
            <person name="Kawashima T."/>
            <person name="Kojima M."/>
            <person name="Kondo S."/>
            <person name="Konno H."/>
            <person name="Nakano K."/>
            <person name="Ninomiya N."/>
            <person name="Nishio T."/>
            <person name="Okada M."/>
            <person name="Plessy C."/>
            <person name="Shibata K."/>
            <person name="Shiraki T."/>
            <person name="Suzuki S."/>
            <person name="Tagami M."/>
            <person name="Waki K."/>
            <person name="Watahiki A."/>
            <person name="Okamura-Oho Y."/>
            <person name="Suzuki H."/>
            <person name="Kawai J."/>
            <person name="Hayashizaki Y."/>
        </authorList>
    </citation>
    <scope>NUCLEOTIDE SEQUENCE [LARGE SCALE MRNA]</scope>
    <source>
        <strain>C57BL/6J</strain>
        <tissue>Cerebellum</tissue>
    </source>
</reference>
<reference key="2">
    <citation type="journal article" date="2004" name="Genome Res.">
        <title>The status, quality, and expansion of the NIH full-length cDNA project: the Mammalian Gene Collection (MGC).</title>
        <authorList>
            <consortium name="The MGC Project Team"/>
        </authorList>
    </citation>
    <scope>NUCLEOTIDE SEQUENCE [LARGE SCALE MRNA]</scope>
    <source>
        <strain>FVB/N</strain>
        <tissue>Kidney</tissue>
    </source>
</reference>
<reference key="3">
    <citation type="journal article" date="2012" name="J. Neurosci.">
        <title>Appoptosin is a novel pro-apoptotic protein and mediates cell death in neurodegeneration.</title>
        <authorList>
            <person name="Zhang H."/>
            <person name="Zhang Y.W."/>
            <person name="Chen Y."/>
            <person name="Huang X."/>
            <person name="Zhou F."/>
            <person name="Wang W."/>
            <person name="Xian B."/>
            <person name="Zhang X."/>
            <person name="Masliah E."/>
            <person name="Chen Q."/>
            <person name="Han J.D."/>
            <person name="Bu G."/>
            <person name="Reed J.C."/>
            <person name="Liao F.F."/>
            <person name="Chen Y.G."/>
            <person name="Xu H."/>
        </authorList>
    </citation>
    <scope>SUBCELLULAR LOCATION</scope>
    <scope>FUNCTION</scope>
</reference>
<gene>
    <name evidence="2" type="primary">Slc25a38</name>
</gene>
<proteinExistence type="evidence at transcript level"/>
<comment type="function">
    <text evidence="2">Mitochondrial glycine transporter that imports glycine into the mitochondrial matrix. Plays an important role in providing glycine for the first enzymatic step in heme biosynthesis, the condensation of glycine with succinyl-CoA to produce 5-aminolevulinate (ALA) in the mitochondrial matrix. Required during erythropoiesis.</text>
</comment>
<comment type="function">
    <text evidence="3">Plays a role as pro-apoptotic protein that induces caspase-dependent apoptosis.</text>
</comment>
<comment type="catalytic activity">
    <reaction evidence="1">
        <text>glycine(in) = glycine(out)</text>
        <dbReference type="Rhea" id="RHEA:70715"/>
        <dbReference type="ChEBI" id="CHEBI:57305"/>
    </reaction>
</comment>
<comment type="subcellular location">
    <subcellularLocation>
        <location evidence="3">Mitochondrion inner membrane</location>
        <topology evidence="2">Multi-pass membrane protein</topology>
    </subcellularLocation>
</comment>
<comment type="similarity">
    <text evidence="2">Belongs to the mitochondrial carrier (TC 2.A.29) family. SLC25A38 subfamily.</text>
</comment>
<accession>Q91XD8</accession>
<feature type="chain" id="PRO_0000291803" description="Mitochondrial glycine transporter">
    <location>
        <begin position="1"/>
        <end position="326"/>
    </location>
</feature>
<feature type="transmembrane region" description="Helical; Name=1" evidence="2">
    <location>
        <begin position="51"/>
        <end position="76"/>
    </location>
</feature>
<feature type="transmembrane region" description="Helical; Name=2" evidence="2">
    <location>
        <begin position="109"/>
        <end position="135"/>
    </location>
</feature>
<feature type="transmembrane region" description="Helical; Name=3" evidence="2">
    <location>
        <begin position="147"/>
        <end position="172"/>
    </location>
</feature>
<feature type="transmembrane region" description="Helical; Name=4" evidence="2">
    <location>
        <begin position="200"/>
        <end position="223"/>
    </location>
</feature>
<feature type="transmembrane region" description="Helical; Name=5" evidence="2">
    <location>
        <begin position="241"/>
        <end position="267"/>
    </location>
</feature>
<feature type="transmembrane region" description="Helical; Name=6" evidence="2">
    <location>
        <begin position="296"/>
        <end position="314"/>
    </location>
</feature>
<feature type="repeat" description="Solcar 1" evidence="2">
    <location>
        <begin position="45"/>
        <end position="134"/>
    </location>
</feature>
<feature type="repeat" description="Solcar 2" evidence="2">
    <location>
        <begin position="141"/>
        <end position="225"/>
    </location>
</feature>
<feature type="repeat" description="Solcar 3" evidence="2">
    <location>
        <begin position="237"/>
        <end position="321"/>
    </location>
</feature>
<protein>
    <recommendedName>
        <fullName evidence="2">Mitochondrial glycine transporter</fullName>
    </recommendedName>
    <alternativeName>
        <fullName evidence="4">Appoptosin</fullName>
    </alternativeName>
    <alternativeName>
        <fullName evidence="2">Solute carrier family 25 member 38</fullName>
    </alternativeName>
</protein>
<sequence length="326" mass="35390">MGVSAEPRSLSVAGAGLASPVIEKARSALLQSQDVEDTVETLMLHPVIKAFLCGSISGTCSTLLFQPLDLLKTRLQALQPSDLGPRRVGMLAVFLKVVRTESLLGLWKGMSPSIVRCVPGVGIYFGTLYSSKQYFLRGHPPTALESVILGMGSRSVAGVCMSPITVIKTRYESGTYSYESIYAALRSIYCSEGHRGLFRGLTATLLRDAPFSGLYLMFYSQTRTAVLHGTAQLDAALIPLINFSCGIFAGVLASLVTQPADVIKTHMQLSPVKFQWIGQAATLIFKNHGLRGFFHGSVPRALRRTLMAAMAWTVYEEMMARMGLKS</sequence>
<name>S2538_MOUSE</name>
<evidence type="ECO:0000250" key="1">
    <source>
        <dbReference type="UniProtKB" id="Q96DW6"/>
    </source>
</evidence>
<evidence type="ECO:0000255" key="2">
    <source>
        <dbReference type="HAMAP-Rule" id="MF_03064"/>
    </source>
</evidence>
<evidence type="ECO:0000269" key="3">
    <source>
    </source>
</evidence>
<evidence type="ECO:0000303" key="4">
    <source>
    </source>
</evidence>
<keyword id="KW-0472">Membrane</keyword>
<keyword id="KW-0496">Mitochondrion</keyword>
<keyword id="KW-0999">Mitochondrion inner membrane</keyword>
<keyword id="KW-1185">Reference proteome</keyword>
<keyword id="KW-0677">Repeat</keyword>
<keyword id="KW-0812">Transmembrane</keyword>
<keyword id="KW-1133">Transmembrane helix</keyword>
<keyword id="KW-0813">Transport</keyword>